<comment type="subunit">
    <text evidence="1">Part of the 30S ribosomal subunit.</text>
</comment>
<comment type="subcellular location">
    <subcellularLocation>
        <location>Plastid</location>
        <location>Chloroplast</location>
    </subcellularLocation>
</comment>
<comment type="similarity">
    <text evidence="2">Belongs to the universal ribosomal protein uS15 family.</text>
</comment>
<name>RR15_GOSHI</name>
<keyword id="KW-0150">Chloroplast</keyword>
<keyword id="KW-0934">Plastid</keyword>
<keyword id="KW-1185">Reference proteome</keyword>
<keyword id="KW-0687">Ribonucleoprotein</keyword>
<keyword id="KW-0689">Ribosomal protein</keyword>
<feature type="chain" id="PRO_0000255553" description="Small ribosomal subunit protein uS15c">
    <location>
        <begin position="1"/>
        <end position="90"/>
    </location>
</feature>
<organism>
    <name type="scientific">Gossypium hirsutum</name>
    <name type="common">Upland cotton</name>
    <name type="synonym">Gossypium mexicanum</name>
    <dbReference type="NCBI Taxonomy" id="3635"/>
    <lineage>
        <taxon>Eukaryota</taxon>
        <taxon>Viridiplantae</taxon>
        <taxon>Streptophyta</taxon>
        <taxon>Embryophyta</taxon>
        <taxon>Tracheophyta</taxon>
        <taxon>Spermatophyta</taxon>
        <taxon>Magnoliopsida</taxon>
        <taxon>eudicotyledons</taxon>
        <taxon>Gunneridae</taxon>
        <taxon>Pentapetalae</taxon>
        <taxon>rosids</taxon>
        <taxon>malvids</taxon>
        <taxon>Malvales</taxon>
        <taxon>Malvaceae</taxon>
        <taxon>Malvoideae</taxon>
        <taxon>Gossypium</taxon>
    </lineage>
</organism>
<gene>
    <name type="primary">rps15</name>
</gene>
<protein>
    <recommendedName>
        <fullName evidence="2">Small ribosomal subunit protein uS15c</fullName>
    </recommendedName>
    <alternativeName>
        <fullName>30S ribosomal protein S15, chloroplastic</fullName>
    </alternativeName>
</protein>
<dbReference type="EMBL" id="DQ345959">
    <property type="protein sequence ID" value="ABC73675.1"/>
    <property type="molecule type" value="Genomic_DNA"/>
</dbReference>
<dbReference type="RefSeq" id="YP_538983.1">
    <property type="nucleotide sequence ID" value="NC_007944.1"/>
</dbReference>
<dbReference type="SMR" id="Q2L954"/>
<dbReference type="GeneID" id="3989234"/>
<dbReference type="KEGG" id="ghi:3989234"/>
<dbReference type="OMA" id="GHFATHK"/>
<dbReference type="OrthoDB" id="29185at41938"/>
<dbReference type="Proteomes" id="UP000189702">
    <property type="component" value="Chloroplast Pltd"/>
</dbReference>
<dbReference type="GO" id="GO:0009507">
    <property type="term" value="C:chloroplast"/>
    <property type="evidence" value="ECO:0007669"/>
    <property type="project" value="UniProtKB-SubCell"/>
</dbReference>
<dbReference type="GO" id="GO:1990904">
    <property type="term" value="C:ribonucleoprotein complex"/>
    <property type="evidence" value="ECO:0007669"/>
    <property type="project" value="UniProtKB-KW"/>
</dbReference>
<dbReference type="GO" id="GO:0005840">
    <property type="term" value="C:ribosome"/>
    <property type="evidence" value="ECO:0007669"/>
    <property type="project" value="UniProtKB-KW"/>
</dbReference>
<dbReference type="GO" id="GO:0003735">
    <property type="term" value="F:structural constituent of ribosome"/>
    <property type="evidence" value="ECO:0007669"/>
    <property type="project" value="InterPro"/>
</dbReference>
<dbReference type="GO" id="GO:0006412">
    <property type="term" value="P:translation"/>
    <property type="evidence" value="ECO:0007669"/>
    <property type="project" value="UniProtKB-UniRule"/>
</dbReference>
<dbReference type="CDD" id="cd00353">
    <property type="entry name" value="Ribosomal_S15p_S13e"/>
    <property type="match status" value="1"/>
</dbReference>
<dbReference type="Gene3D" id="1.10.287.10">
    <property type="entry name" value="S15/NS1, RNA-binding"/>
    <property type="match status" value="1"/>
</dbReference>
<dbReference type="HAMAP" id="MF_01343_B">
    <property type="entry name" value="Ribosomal_uS15_B"/>
    <property type="match status" value="1"/>
</dbReference>
<dbReference type="InterPro" id="IPR000589">
    <property type="entry name" value="Ribosomal_uS15"/>
</dbReference>
<dbReference type="InterPro" id="IPR005290">
    <property type="entry name" value="Ribosomal_uS15_bac-type"/>
</dbReference>
<dbReference type="InterPro" id="IPR009068">
    <property type="entry name" value="uS15_NS1_RNA-bd_sf"/>
</dbReference>
<dbReference type="NCBIfam" id="TIGR00952">
    <property type="entry name" value="S15_bact"/>
    <property type="match status" value="1"/>
</dbReference>
<dbReference type="PANTHER" id="PTHR23321">
    <property type="entry name" value="RIBOSOMAL PROTEIN S15, BACTERIAL AND ORGANELLAR"/>
    <property type="match status" value="1"/>
</dbReference>
<dbReference type="PANTHER" id="PTHR23321:SF26">
    <property type="entry name" value="SMALL RIBOSOMAL SUBUNIT PROTEIN US15M"/>
    <property type="match status" value="1"/>
</dbReference>
<dbReference type="Pfam" id="PF00312">
    <property type="entry name" value="Ribosomal_S15"/>
    <property type="match status" value="1"/>
</dbReference>
<dbReference type="SMART" id="SM01387">
    <property type="entry name" value="Ribosomal_S15"/>
    <property type="match status" value="1"/>
</dbReference>
<dbReference type="SUPFAM" id="SSF47060">
    <property type="entry name" value="S15/NS1 RNA-binding domain"/>
    <property type="match status" value="1"/>
</dbReference>
<dbReference type="PROSITE" id="PS00362">
    <property type="entry name" value="RIBOSOMAL_S15"/>
    <property type="match status" value="1"/>
</dbReference>
<accession>Q2L954</accession>
<geneLocation type="chloroplast"/>
<evidence type="ECO:0000250" key="1"/>
<evidence type="ECO:0000305" key="2"/>
<sequence length="90" mass="10782">MVKNSFISVIFQEKKEENRGSAEFQIVSFTNKIRRLTSHLELHKKDYLSQRGLRKILGKRQRLLSYLSKTNKIRYKELIGELDIRESKNR</sequence>
<reference key="1">
    <citation type="journal article" date="2006" name="BMC Genomics">
        <title>The complete chloroplast genome sequence of Gossypium hirsutum: organization and phylogenetic relationships to other angiosperms.</title>
        <authorList>
            <person name="Lee S.-B."/>
            <person name="Kaittanis C."/>
            <person name="Jansen R.K."/>
            <person name="Hostetler J.B."/>
            <person name="Tallon L.J."/>
            <person name="Town C.D."/>
            <person name="Daniell H."/>
        </authorList>
    </citation>
    <scope>NUCLEOTIDE SEQUENCE [LARGE SCALE GENOMIC DNA]</scope>
    <source>
        <strain>cv. Coker 310FR</strain>
    </source>
</reference>
<proteinExistence type="inferred from homology"/>